<name>ARND_SHIBS</name>
<evidence type="ECO:0000255" key="1">
    <source>
        <dbReference type="HAMAP-Rule" id="MF_01870"/>
    </source>
</evidence>
<proteinExistence type="inferred from homology"/>
<dbReference type="EC" id="3.5.1.n3" evidence="1"/>
<dbReference type="EMBL" id="CP000036">
    <property type="protein sequence ID" value="ABB66857.1"/>
    <property type="molecule type" value="Genomic_DNA"/>
</dbReference>
<dbReference type="RefSeq" id="WP_000169731.1">
    <property type="nucleotide sequence ID" value="NC_007613.1"/>
</dbReference>
<dbReference type="SMR" id="Q31YK1"/>
<dbReference type="KEGG" id="sbo:SBO_2293"/>
<dbReference type="HOGENOM" id="CLU_084199_0_0_6"/>
<dbReference type="UniPathway" id="UPA00030"/>
<dbReference type="UniPathway" id="UPA00036">
    <property type="reaction ID" value="UER00496"/>
</dbReference>
<dbReference type="Proteomes" id="UP000007067">
    <property type="component" value="Chromosome"/>
</dbReference>
<dbReference type="GO" id="GO:0016020">
    <property type="term" value="C:membrane"/>
    <property type="evidence" value="ECO:0007669"/>
    <property type="project" value="GOC"/>
</dbReference>
<dbReference type="GO" id="GO:0016811">
    <property type="term" value="F:hydrolase activity, acting on carbon-nitrogen (but not peptide) bonds, in linear amides"/>
    <property type="evidence" value="ECO:0007669"/>
    <property type="project" value="UniProtKB-UniRule"/>
</dbReference>
<dbReference type="GO" id="GO:0036108">
    <property type="term" value="P:4-amino-4-deoxy-alpha-L-arabinopyranosyl undecaprenyl phosphate biosynthetic process"/>
    <property type="evidence" value="ECO:0007669"/>
    <property type="project" value="UniProtKB-UniRule"/>
</dbReference>
<dbReference type="GO" id="GO:0009245">
    <property type="term" value="P:lipid A biosynthetic process"/>
    <property type="evidence" value="ECO:0007669"/>
    <property type="project" value="UniProtKB-UniRule"/>
</dbReference>
<dbReference type="GO" id="GO:0009103">
    <property type="term" value="P:lipopolysaccharide biosynthetic process"/>
    <property type="evidence" value="ECO:0007669"/>
    <property type="project" value="UniProtKB-UniRule"/>
</dbReference>
<dbReference type="GO" id="GO:0046677">
    <property type="term" value="P:response to antibiotic"/>
    <property type="evidence" value="ECO:0007669"/>
    <property type="project" value="UniProtKB-KW"/>
</dbReference>
<dbReference type="CDD" id="cd10939">
    <property type="entry name" value="CE4_ArnD"/>
    <property type="match status" value="1"/>
</dbReference>
<dbReference type="Gene3D" id="3.20.20.370">
    <property type="entry name" value="Glycoside hydrolase/deacetylase"/>
    <property type="match status" value="1"/>
</dbReference>
<dbReference type="HAMAP" id="MF_01870">
    <property type="entry name" value="ArnD"/>
    <property type="match status" value="1"/>
</dbReference>
<dbReference type="InterPro" id="IPR023557">
    <property type="entry name" value="ArnD"/>
</dbReference>
<dbReference type="InterPro" id="IPR011330">
    <property type="entry name" value="Glyco_hydro/deAcase_b/a-brl"/>
</dbReference>
<dbReference type="InterPro" id="IPR002509">
    <property type="entry name" value="NODB_dom"/>
</dbReference>
<dbReference type="InterPro" id="IPR050248">
    <property type="entry name" value="Polysacc_deacetylase_ArnD"/>
</dbReference>
<dbReference type="NCBIfam" id="NF011923">
    <property type="entry name" value="PRK15394.1"/>
    <property type="match status" value="1"/>
</dbReference>
<dbReference type="PANTHER" id="PTHR10587:SF137">
    <property type="entry name" value="4-DEOXY-4-FORMAMIDO-L-ARABINOSE-PHOSPHOUNDECAPRENOL DEFORMYLASE ARND-RELATED"/>
    <property type="match status" value="1"/>
</dbReference>
<dbReference type="PANTHER" id="PTHR10587">
    <property type="entry name" value="GLYCOSYL TRANSFERASE-RELATED"/>
    <property type="match status" value="1"/>
</dbReference>
<dbReference type="Pfam" id="PF01522">
    <property type="entry name" value="Polysacc_deac_1"/>
    <property type="match status" value="1"/>
</dbReference>
<dbReference type="SUPFAM" id="SSF88713">
    <property type="entry name" value="Glycoside hydrolase/deacetylase"/>
    <property type="match status" value="1"/>
</dbReference>
<dbReference type="PROSITE" id="PS51677">
    <property type="entry name" value="NODB"/>
    <property type="match status" value="1"/>
</dbReference>
<protein>
    <recommendedName>
        <fullName evidence="1">Probable 4-deoxy-4-formamido-L-arabinose-phosphoundecaprenol deformylase ArnD</fullName>
        <ecNumber evidence="1">3.5.1.n3</ecNumber>
    </recommendedName>
</protein>
<gene>
    <name evidence="1" type="primary">arnD</name>
    <name type="ordered locus">SBO_2293</name>
</gene>
<comment type="function">
    <text evidence="1">Catalyzes the deformylation of 4-deoxy-4-formamido-L-arabinose-phosphoundecaprenol to 4-amino-4-deoxy-L-arabinose-phosphoundecaprenol. The modified arabinose is attached to lipid A and is required for resistance to polymyxin and cationic antimicrobial peptides.</text>
</comment>
<comment type="catalytic activity">
    <reaction evidence="1">
        <text>4-deoxy-4-formamido-alpha-L-arabinopyranosyl di-trans,octa-cis-undecaprenyl phosphate + H2O = 4-amino-4-deoxy-alpha-L-arabinopyranosyl di-trans,octa-cis-undecaprenyl phosphate + formate</text>
        <dbReference type="Rhea" id="RHEA:27734"/>
        <dbReference type="ChEBI" id="CHEBI:15377"/>
        <dbReference type="ChEBI" id="CHEBI:15740"/>
        <dbReference type="ChEBI" id="CHEBI:58909"/>
        <dbReference type="ChEBI" id="CHEBI:60463"/>
        <dbReference type="EC" id="3.5.1.n3"/>
    </reaction>
</comment>
<comment type="pathway">
    <text evidence="1">Glycolipid biosynthesis; 4-amino-4-deoxy-alpha-L-arabinose undecaprenyl phosphate biosynthesis; 4-amino-4-deoxy-alpha-L-arabinose undecaprenyl phosphate from UDP-4-deoxy-4-formamido-beta-L-arabinose and undecaprenyl phosphate: step 2/2.</text>
</comment>
<comment type="pathway">
    <text evidence="1">Bacterial outer membrane biogenesis; lipopolysaccharide biosynthesis.</text>
</comment>
<comment type="similarity">
    <text evidence="1">Belongs to the polysaccharide deacetylase family. ArnD deformylase subfamily.</text>
</comment>
<sequence length="296" mass="33142">MTKVGLRIDVDTFRGTREGVPRLLEILSKHNIQASIFFSVGPDNMGRHLWRLVKPQFLWKMLRSNAASLYGWDILLAGTAWPGKEIGHANADIIREAAKHHEVGLHAWDHHAWQARSGNWDRQTMIDDIARGLRTLEEIIGQPVTCSAAAGWRADQKVIEAKEAFHLRYNSDCRGAMPFRPLLESGNPGTAQIPVTLPTWDEVIGRDVKTEDFNGWLLNRILRDKGTPVYTIHAEVEGCAYQHNFVDLLKRAAQEGVTFCPLSELLSETLPLGQVVRGNIAGREGWLGCQQIAGSR</sequence>
<accession>Q31YK1</accession>
<keyword id="KW-0046">Antibiotic resistance</keyword>
<keyword id="KW-0378">Hydrolase</keyword>
<keyword id="KW-0441">Lipid A biosynthesis</keyword>
<keyword id="KW-0444">Lipid biosynthesis</keyword>
<keyword id="KW-0443">Lipid metabolism</keyword>
<keyword id="KW-0448">Lipopolysaccharide biosynthesis</keyword>
<organism>
    <name type="scientific">Shigella boydii serotype 4 (strain Sb227)</name>
    <dbReference type="NCBI Taxonomy" id="300268"/>
    <lineage>
        <taxon>Bacteria</taxon>
        <taxon>Pseudomonadati</taxon>
        <taxon>Pseudomonadota</taxon>
        <taxon>Gammaproteobacteria</taxon>
        <taxon>Enterobacterales</taxon>
        <taxon>Enterobacteriaceae</taxon>
        <taxon>Shigella</taxon>
    </lineage>
</organism>
<feature type="chain" id="PRO_0000383543" description="Probable 4-deoxy-4-formamido-L-arabinose-phosphoundecaprenol deformylase ArnD">
    <location>
        <begin position="1"/>
        <end position="296"/>
    </location>
</feature>
<feature type="domain" description="NodB homology" evidence="1">
    <location>
        <begin position="2"/>
        <end position="260"/>
    </location>
</feature>
<reference key="1">
    <citation type="journal article" date="2005" name="Nucleic Acids Res.">
        <title>Genome dynamics and diversity of Shigella species, the etiologic agents of bacillary dysentery.</title>
        <authorList>
            <person name="Yang F."/>
            <person name="Yang J."/>
            <person name="Zhang X."/>
            <person name="Chen L."/>
            <person name="Jiang Y."/>
            <person name="Yan Y."/>
            <person name="Tang X."/>
            <person name="Wang J."/>
            <person name="Xiong Z."/>
            <person name="Dong J."/>
            <person name="Xue Y."/>
            <person name="Zhu Y."/>
            <person name="Xu X."/>
            <person name="Sun L."/>
            <person name="Chen S."/>
            <person name="Nie H."/>
            <person name="Peng J."/>
            <person name="Xu J."/>
            <person name="Wang Y."/>
            <person name="Yuan Z."/>
            <person name="Wen Y."/>
            <person name="Yao Z."/>
            <person name="Shen Y."/>
            <person name="Qiang B."/>
            <person name="Hou Y."/>
            <person name="Yu J."/>
            <person name="Jin Q."/>
        </authorList>
    </citation>
    <scope>NUCLEOTIDE SEQUENCE [LARGE SCALE GENOMIC DNA]</scope>
    <source>
        <strain>Sb227</strain>
    </source>
</reference>